<comment type="function">
    <text evidence="1">Binds directly to 23S ribosomal RNA and is necessary for the in vitro assembly process of the 50S ribosomal subunit. It is not involved in the protein synthesizing functions of that subunit.</text>
</comment>
<comment type="similarity">
    <text evidence="1">Belongs to the bacterial ribosomal protein bL20 family.</text>
</comment>
<gene>
    <name evidence="1" type="primary">rplT</name>
    <name type="ordered locus">MGAS2096_Spy0686</name>
</gene>
<dbReference type="EMBL" id="CP000261">
    <property type="protein sequence ID" value="ABF35738.1"/>
    <property type="molecule type" value="Genomic_DNA"/>
</dbReference>
<dbReference type="SMR" id="Q1JCH0"/>
<dbReference type="KEGG" id="spj:MGAS2096_Spy0686"/>
<dbReference type="HOGENOM" id="CLU_123265_0_1_9"/>
<dbReference type="GO" id="GO:1990904">
    <property type="term" value="C:ribonucleoprotein complex"/>
    <property type="evidence" value="ECO:0007669"/>
    <property type="project" value="UniProtKB-KW"/>
</dbReference>
<dbReference type="GO" id="GO:0005840">
    <property type="term" value="C:ribosome"/>
    <property type="evidence" value="ECO:0007669"/>
    <property type="project" value="UniProtKB-KW"/>
</dbReference>
<dbReference type="GO" id="GO:0019843">
    <property type="term" value="F:rRNA binding"/>
    <property type="evidence" value="ECO:0007669"/>
    <property type="project" value="UniProtKB-UniRule"/>
</dbReference>
<dbReference type="GO" id="GO:0003735">
    <property type="term" value="F:structural constituent of ribosome"/>
    <property type="evidence" value="ECO:0007669"/>
    <property type="project" value="InterPro"/>
</dbReference>
<dbReference type="GO" id="GO:0000027">
    <property type="term" value="P:ribosomal large subunit assembly"/>
    <property type="evidence" value="ECO:0007669"/>
    <property type="project" value="UniProtKB-UniRule"/>
</dbReference>
<dbReference type="GO" id="GO:0006412">
    <property type="term" value="P:translation"/>
    <property type="evidence" value="ECO:0007669"/>
    <property type="project" value="InterPro"/>
</dbReference>
<dbReference type="CDD" id="cd07026">
    <property type="entry name" value="Ribosomal_L20"/>
    <property type="match status" value="1"/>
</dbReference>
<dbReference type="FunFam" id="1.10.1900.20:FF:000001">
    <property type="entry name" value="50S ribosomal protein L20"/>
    <property type="match status" value="1"/>
</dbReference>
<dbReference type="Gene3D" id="6.10.160.10">
    <property type="match status" value="1"/>
</dbReference>
<dbReference type="Gene3D" id="1.10.1900.20">
    <property type="entry name" value="Ribosomal protein L20"/>
    <property type="match status" value="1"/>
</dbReference>
<dbReference type="HAMAP" id="MF_00382">
    <property type="entry name" value="Ribosomal_bL20"/>
    <property type="match status" value="1"/>
</dbReference>
<dbReference type="InterPro" id="IPR005813">
    <property type="entry name" value="Ribosomal_bL20"/>
</dbReference>
<dbReference type="InterPro" id="IPR049946">
    <property type="entry name" value="RIBOSOMAL_L20_CS"/>
</dbReference>
<dbReference type="InterPro" id="IPR035566">
    <property type="entry name" value="Ribosomal_protein_bL20_C"/>
</dbReference>
<dbReference type="NCBIfam" id="TIGR01032">
    <property type="entry name" value="rplT_bact"/>
    <property type="match status" value="1"/>
</dbReference>
<dbReference type="PANTHER" id="PTHR10986">
    <property type="entry name" value="39S RIBOSOMAL PROTEIN L20"/>
    <property type="match status" value="1"/>
</dbReference>
<dbReference type="Pfam" id="PF00453">
    <property type="entry name" value="Ribosomal_L20"/>
    <property type="match status" value="1"/>
</dbReference>
<dbReference type="PRINTS" id="PR00062">
    <property type="entry name" value="RIBOSOMALL20"/>
</dbReference>
<dbReference type="SUPFAM" id="SSF74731">
    <property type="entry name" value="Ribosomal protein L20"/>
    <property type="match status" value="1"/>
</dbReference>
<dbReference type="PROSITE" id="PS00937">
    <property type="entry name" value="RIBOSOMAL_L20"/>
    <property type="match status" value="1"/>
</dbReference>
<reference key="1">
    <citation type="journal article" date="2006" name="Proc. Natl. Acad. Sci. U.S.A.">
        <title>Molecular genetic anatomy of inter- and intraserotype variation in the human bacterial pathogen group A Streptococcus.</title>
        <authorList>
            <person name="Beres S.B."/>
            <person name="Richter E.W."/>
            <person name="Nagiec M.J."/>
            <person name="Sumby P."/>
            <person name="Porcella S.F."/>
            <person name="DeLeo F.R."/>
            <person name="Musser J.M."/>
        </authorList>
    </citation>
    <scope>NUCLEOTIDE SEQUENCE [LARGE SCALE GENOMIC DNA]</scope>
    <source>
        <strain>MGAS2096</strain>
    </source>
</reference>
<organism>
    <name type="scientific">Streptococcus pyogenes serotype M12 (strain MGAS2096)</name>
    <dbReference type="NCBI Taxonomy" id="370553"/>
    <lineage>
        <taxon>Bacteria</taxon>
        <taxon>Bacillati</taxon>
        <taxon>Bacillota</taxon>
        <taxon>Bacilli</taxon>
        <taxon>Lactobacillales</taxon>
        <taxon>Streptococcaceae</taxon>
        <taxon>Streptococcus</taxon>
    </lineage>
</organism>
<protein>
    <recommendedName>
        <fullName evidence="1">Large ribosomal subunit protein bL20</fullName>
    </recommendedName>
    <alternativeName>
        <fullName evidence="2">50S ribosomal protein L20</fullName>
    </alternativeName>
</protein>
<sequence>MARVKGGVVSRKRRKRILKLAKGYYGAKHILFRTAKEQVMNSYYYAYRDRRQKKRDFRKLWITRINAAARMNGLSYSQLMHGLKLAEIEVNRKMLADLAVADAAAFTALADAAKAKLGK</sequence>
<evidence type="ECO:0000255" key="1">
    <source>
        <dbReference type="HAMAP-Rule" id="MF_00382"/>
    </source>
</evidence>
<evidence type="ECO:0000305" key="2"/>
<feature type="chain" id="PRO_1000049083" description="Large ribosomal subunit protein bL20">
    <location>
        <begin position="1"/>
        <end position="119"/>
    </location>
</feature>
<accession>Q1JCH0</accession>
<keyword id="KW-0687">Ribonucleoprotein</keyword>
<keyword id="KW-0689">Ribosomal protein</keyword>
<keyword id="KW-0694">RNA-binding</keyword>
<keyword id="KW-0699">rRNA-binding</keyword>
<name>RL20_STRPB</name>
<proteinExistence type="inferred from homology"/>